<accession>Q7T3T2</accession>
<feature type="initiator methionine" description="Removed" evidence="1">
    <location>
        <position position="1"/>
    </location>
</feature>
<feature type="chain" id="PRO_0000198234" description="Calmodulin">
    <location>
        <begin position="2"/>
        <end position="149"/>
    </location>
</feature>
<feature type="domain" description="EF-hand 1" evidence="2">
    <location>
        <begin position="8"/>
        <end position="43"/>
    </location>
</feature>
<feature type="domain" description="EF-hand 2" evidence="2">
    <location>
        <begin position="44"/>
        <end position="79"/>
    </location>
</feature>
<feature type="domain" description="EF-hand 3" evidence="2">
    <location>
        <begin position="81"/>
        <end position="116"/>
    </location>
</feature>
<feature type="domain" description="EF-hand 4" evidence="2">
    <location>
        <begin position="117"/>
        <end position="149"/>
    </location>
</feature>
<feature type="binding site" evidence="2">
    <location>
        <position position="21"/>
    </location>
    <ligand>
        <name>Ca(2+)</name>
        <dbReference type="ChEBI" id="CHEBI:29108"/>
        <label>1</label>
    </ligand>
</feature>
<feature type="binding site" evidence="2">
    <location>
        <position position="23"/>
    </location>
    <ligand>
        <name>Ca(2+)</name>
        <dbReference type="ChEBI" id="CHEBI:29108"/>
        <label>1</label>
    </ligand>
</feature>
<feature type="binding site" evidence="2">
    <location>
        <position position="25"/>
    </location>
    <ligand>
        <name>Ca(2+)</name>
        <dbReference type="ChEBI" id="CHEBI:29108"/>
        <label>1</label>
    </ligand>
</feature>
<feature type="binding site" evidence="2">
    <location>
        <position position="27"/>
    </location>
    <ligand>
        <name>Ca(2+)</name>
        <dbReference type="ChEBI" id="CHEBI:29108"/>
        <label>1</label>
    </ligand>
</feature>
<feature type="binding site" evidence="2">
    <location>
        <position position="32"/>
    </location>
    <ligand>
        <name>Ca(2+)</name>
        <dbReference type="ChEBI" id="CHEBI:29108"/>
        <label>1</label>
    </ligand>
</feature>
<feature type="binding site" evidence="2">
    <location>
        <position position="57"/>
    </location>
    <ligand>
        <name>Ca(2+)</name>
        <dbReference type="ChEBI" id="CHEBI:29108"/>
        <label>2</label>
    </ligand>
</feature>
<feature type="binding site" evidence="2">
    <location>
        <position position="59"/>
    </location>
    <ligand>
        <name>Ca(2+)</name>
        <dbReference type="ChEBI" id="CHEBI:29108"/>
        <label>2</label>
    </ligand>
</feature>
<feature type="binding site" evidence="2">
    <location>
        <position position="61"/>
    </location>
    <ligand>
        <name>Ca(2+)</name>
        <dbReference type="ChEBI" id="CHEBI:29108"/>
        <label>2</label>
    </ligand>
</feature>
<feature type="binding site" evidence="2">
    <location>
        <position position="63"/>
    </location>
    <ligand>
        <name>Ca(2+)</name>
        <dbReference type="ChEBI" id="CHEBI:29108"/>
        <label>2</label>
    </ligand>
</feature>
<feature type="binding site" evidence="2">
    <location>
        <position position="68"/>
    </location>
    <ligand>
        <name>Ca(2+)</name>
        <dbReference type="ChEBI" id="CHEBI:29108"/>
        <label>2</label>
    </ligand>
</feature>
<feature type="binding site" evidence="2">
    <location>
        <position position="94"/>
    </location>
    <ligand>
        <name>Ca(2+)</name>
        <dbReference type="ChEBI" id="CHEBI:29108"/>
        <label>3</label>
    </ligand>
</feature>
<feature type="binding site" evidence="2">
    <location>
        <position position="96"/>
    </location>
    <ligand>
        <name>Ca(2+)</name>
        <dbReference type="ChEBI" id="CHEBI:29108"/>
        <label>3</label>
    </ligand>
</feature>
<feature type="binding site" evidence="2">
    <location>
        <position position="98"/>
    </location>
    <ligand>
        <name>Ca(2+)</name>
        <dbReference type="ChEBI" id="CHEBI:29108"/>
        <label>3</label>
    </ligand>
</feature>
<feature type="binding site" evidence="2">
    <location>
        <position position="100"/>
    </location>
    <ligand>
        <name>Ca(2+)</name>
        <dbReference type="ChEBI" id="CHEBI:29108"/>
        <label>3</label>
    </ligand>
</feature>
<feature type="binding site" evidence="2">
    <location>
        <position position="105"/>
    </location>
    <ligand>
        <name>Ca(2+)</name>
        <dbReference type="ChEBI" id="CHEBI:29108"/>
        <label>3</label>
    </ligand>
</feature>
<feature type="binding site" evidence="2">
    <location>
        <position position="130"/>
    </location>
    <ligand>
        <name>Ca(2+)</name>
        <dbReference type="ChEBI" id="CHEBI:29108"/>
        <label>4</label>
    </ligand>
</feature>
<feature type="binding site" evidence="2">
    <location>
        <position position="132"/>
    </location>
    <ligand>
        <name>Ca(2+)</name>
        <dbReference type="ChEBI" id="CHEBI:29108"/>
        <label>4</label>
    </ligand>
</feature>
<feature type="binding site" evidence="2">
    <location>
        <position position="134"/>
    </location>
    <ligand>
        <name>Ca(2+)</name>
        <dbReference type="ChEBI" id="CHEBI:29108"/>
        <label>4</label>
    </ligand>
</feature>
<feature type="binding site" evidence="2">
    <location>
        <position position="136"/>
    </location>
    <ligand>
        <name>Ca(2+)</name>
        <dbReference type="ChEBI" id="CHEBI:29108"/>
        <label>4</label>
    </ligand>
</feature>
<feature type="binding site" evidence="2">
    <location>
        <position position="141"/>
    </location>
    <ligand>
        <name>Ca(2+)</name>
        <dbReference type="ChEBI" id="CHEBI:29108"/>
        <label>4</label>
    </ligand>
</feature>
<feature type="modified residue" description="N-acetylalanine" evidence="1">
    <location>
        <position position="2"/>
    </location>
</feature>
<feature type="modified residue" description="N6,N6,N6-trimethyllysine" evidence="1">
    <location>
        <position position="116"/>
    </location>
</feature>
<keyword id="KW-0007">Acetylation</keyword>
<keyword id="KW-0106">Calcium</keyword>
<keyword id="KW-0479">Metal-binding</keyword>
<keyword id="KW-0488">Methylation</keyword>
<keyword id="KW-0677">Repeat</keyword>
<sequence>MADQLTEEQIAEFKEAFSLFDKDGDGTITTKELGTVMRSLGQNPTEAELQDMINEVDADGNGTIDFPEFLTMMARKMKDTDSEEEIREAFRVFDKDGNGYISAAELRHVMTNLGEKLTDEEVDEMIREADIDGDGQVNYEEFVQIMTAK</sequence>
<proteinExistence type="evidence at transcript level"/>
<name>CALM_EPIAK</name>
<evidence type="ECO:0000250" key="1">
    <source>
        <dbReference type="UniProtKB" id="P0DP23"/>
    </source>
</evidence>
<evidence type="ECO:0000255" key="2">
    <source>
        <dbReference type="PROSITE-ProRule" id="PRU00448"/>
    </source>
</evidence>
<evidence type="ECO:0000305" key="3"/>
<comment type="function">
    <text evidence="1">Calmodulin acts as part of a calcium signal transduction pathway by mediating the control of a large number of enzymes, ion channels, aquaporins and other proteins through calcium-binding. Calcium-binding is required for the activation of calmodulin. Among the enzymes to be stimulated by the calmodulin-calcium complex are a number of protein kinases, such as myosin light-chain kinases and calmodulin-dependent protein kinase type II (CaMK2), and phosphatases.</text>
</comment>
<comment type="miscellaneous">
    <text>This protein has four functional calcium-binding sites.</text>
</comment>
<comment type="similarity">
    <text evidence="3">Belongs to the calmodulin family.</text>
</comment>
<protein>
    <recommendedName>
        <fullName>Calmodulin</fullName>
        <shortName>CaM</shortName>
    </recommendedName>
</protein>
<dbReference type="EMBL" id="AY281363">
    <property type="protein sequence ID" value="AAP40017.1"/>
    <property type="molecule type" value="mRNA"/>
</dbReference>
<dbReference type="SMR" id="Q7T3T2"/>
<dbReference type="GO" id="GO:0016460">
    <property type="term" value="C:myosin II complex"/>
    <property type="evidence" value="ECO:0007669"/>
    <property type="project" value="TreeGrafter"/>
</dbReference>
<dbReference type="GO" id="GO:0005509">
    <property type="term" value="F:calcium ion binding"/>
    <property type="evidence" value="ECO:0007669"/>
    <property type="project" value="InterPro"/>
</dbReference>
<dbReference type="CDD" id="cd00051">
    <property type="entry name" value="EFh"/>
    <property type="match status" value="2"/>
</dbReference>
<dbReference type="FunFam" id="1.10.238.10:FF:000527">
    <property type="entry name" value="Calmodulin-3"/>
    <property type="match status" value="1"/>
</dbReference>
<dbReference type="Gene3D" id="1.10.238.10">
    <property type="entry name" value="EF-hand"/>
    <property type="match status" value="3"/>
</dbReference>
<dbReference type="InterPro" id="IPR050230">
    <property type="entry name" value="CALM/Myosin/TropC-like"/>
</dbReference>
<dbReference type="InterPro" id="IPR011992">
    <property type="entry name" value="EF-hand-dom_pair"/>
</dbReference>
<dbReference type="InterPro" id="IPR018247">
    <property type="entry name" value="EF_Hand_1_Ca_BS"/>
</dbReference>
<dbReference type="InterPro" id="IPR002048">
    <property type="entry name" value="EF_hand_dom"/>
</dbReference>
<dbReference type="PANTHER" id="PTHR23048:SF0">
    <property type="entry name" value="CALMODULIN LIKE 3"/>
    <property type="match status" value="1"/>
</dbReference>
<dbReference type="PANTHER" id="PTHR23048">
    <property type="entry name" value="MYOSIN LIGHT CHAIN 1, 3"/>
    <property type="match status" value="1"/>
</dbReference>
<dbReference type="Pfam" id="PF13499">
    <property type="entry name" value="EF-hand_7"/>
    <property type="match status" value="2"/>
</dbReference>
<dbReference type="PRINTS" id="PR00450">
    <property type="entry name" value="RECOVERIN"/>
</dbReference>
<dbReference type="SMART" id="SM00054">
    <property type="entry name" value="EFh"/>
    <property type="match status" value="4"/>
</dbReference>
<dbReference type="SUPFAM" id="SSF47473">
    <property type="entry name" value="EF-hand"/>
    <property type="match status" value="1"/>
</dbReference>
<dbReference type="PROSITE" id="PS00018">
    <property type="entry name" value="EF_HAND_1"/>
    <property type="match status" value="4"/>
</dbReference>
<dbReference type="PROSITE" id="PS50222">
    <property type="entry name" value="EF_HAND_2"/>
    <property type="match status" value="4"/>
</dbReference>
<organism>
    <name type="scientific">Epinephelus akaara</name>
    <name type="common">Hong Kong grouper</name>
    <name type="synonym">Serranus akaara</name>
    <dbReference type="NCBI Taxonomy" id="215347"/>
    <lineage>
        <taxon>Eukaryota</taxon>
        <taxon>Metazoa</taxon>
        <taxon>Chordata</taxon>
        <taxon>Craniata</taxon>
        <taxon>Vertebrata</taxon>
        <taxon>Euteleostomi</taxon>
        <taxon>Actinopterygii</taxon>
        <taxon>Neopterygii</taxon>
        <taxon>Teleostei</taxon>
        <taxon>Neoteleostei</taxon>
        <taxon>Acanthomorphata</taxon>
        <taxon>Eupercaria</taxon>
        <taxon>Perciformes</taxon>
        <taxon>Serranoidei</taxon>
        <taxon>Serranidae</taxon>
        <taxon>Epinephelinae</taxon>
        <taxon>Epinephelini</taxon>
        <taxon>Epinephelus</taxon>
    </lineage>
</organism>
<reference key="1">
    <citation type="submission" date="2003-04" db="EMBL/GenBank/DDBJ databases">
        <title>Calmodulin (CAL1) is differentially expressed in the process of sex-reversal in Epinephelus akaara.</title>
        <authorList>
            <person name="Li S.-W."/>
            <person name="Pang L."/>
            <person name="Wen J.-J."/>
        </authorList>
    </citation>
    <scope>NUCLEOTIDE SEQUENCE [MRNA]</scope>
</reference>
<gene>
    <name type="primary">calm</name>
    <name type="synonym">cal1</name>
</gene>